<evidence type="ECO:0000269" key="1">
    <source>
    </source>
</evidence>
<evidence type="ECO:0000305" key="2"/>
<evidence type="ECO:0000305" key="3">
    <source>
    </source>
</evidence>
<proteinExistence type="evidence at protein level"/>
<reference key="1">
    <citation type="journal article" date="2012" name="Toxicon">
        <title>Secretion and maturation of conotoxins in the venom ducts of Conus textile.</title>
        <authorList>
            <person name="Dobson R."/>
            <person name="Collodoro M."/>
            <person name="Gilles N."/>
            <person name="Turtoi A."/>
            <person name="De Pauw E."/>
            <person name="Quinton L."/>
        </authorList>
    </citation>
    <scope>PROTEIN SEQUENCE</scope>
    <scope>AMIDATION AT LEU-14</scope>
    <scope>IDENTIFICATION BY MASS SPECTROMETRY</scope>
    <scope>TISSUE SPECIFICITY</scope>
    <scope>POSITION IN VENOM DUCT</scope>
    <scope>SUBCELLULAR LOCATION</scope>
    <source>
        <tissue>Venom</tissue>
    </source>
</reference>
<accession>P0DPK7</accession>
<dbReference type="GO" id="GO:0005576">
    <property type="term" value="C:extracellular region"/>
    <property type="evidence" value="ECO:0007669"/>
    <property type="project" value="UniProtKB-SubCell"/>
</dbReference>
<dbReference type="GO" id="GO:0090729">
    <property type="term" value="F:toxin activity"/>
    <property type="evidence" value="ECO:0007669"/>
    <property type="project" value="UniProtKB-KW"/>
</dbReference>
<keyword id="KW-0027">Amidation</keyword>
<keyword id="KW-0903">Direct protein sequencing</keyword>
<keyword id="KW-1015">Disulfide bond</keyword>
<keyword id="KW-0964">Secreted</keyword>
<keyword id="KW-0800">Toxin</keyword>
<sequence>PCCSKLHDNSCCGL</sequence>
<organism>
    <name type="scientific">Conus textile</name>
    <name type="common">Cloth-of-gold cone</name>
    <dbReference type="NCBI Taxonomy" id="6494"/>
    <lineage>
        <taxon>Eukaryota</taxon>
        <taxon>Metazoa</taxon>
        <taxon>Spiralia</taxon>
        <taxon>Lophotrochozoa</taxon>
        <taxon>Mollusca</taxon>
        <taxon>Gastropoda</taxon>
        <taxon>Caenogastropoda</taxon>
        <taxon>Neogastropoda</taxon>
        <taxon>Conoidea</taxon>
        <taxon>Conidae</taxon>
        <taxon>Conus</taxon>
        <taxon>Cylinder</taxon>
    </lineage>
</organism>
<comment type="subcellular location">
    <subcellularLocation>
        <location evidence="1">Secreted</location>
    </subcellularLocation>
</comment>
<comment type="tissue specificity">
    <text evidence="3">Expressed by the venom duct. Is present in all duct parts with a highest content in part 2 (proximal of the venom bulb) and then decreases in concentration toward the end of the duct.</text>
</comment>
<comment type="domain">
    <text evidence="2">The cysteine framework is V (CC-CC).</text>
</comment>
<comment type="PTM">
    <text evidence="2">Contains 2 disulfide bonds that can be either 'C1-C3, C2-C4' or 'C1-C4, C2-C3', since these disulfide connectivities have been observed for conotoxins with cysteine framework V (for examples, see AC P0DQQ7 and AC P81755).</text>
</comment>
<comment type="miscellaneous">
    <text evidence="2">The name has been given by ConoServer.</text>
</comment>
<feature type="peptide" id="PRO_0000445010" description="Conotoxin tx5e" evidence="1">
    <location>
        <begin position="1"/>
        <end position="14"/>
    </location>
</feature>
<feature type="modified residue" description="Leucine amide" evidence="1">
    <location>
        <position position="14"/>
    </location>
</feature>
<protein>
    <recommendedName>
        <fullName evidence="2">Conotoxin tx5e</fullName>
    </recommendedName>
</protein>
<name>CX5E_CONTE</name>